<protein>
    <recommendedName>
        <fullName evidence="16">Beta-1,4-galactosyltransferase 5</fullName>
        <shortName>Beta-1,4-GalTase 5</shortName>
        <shortName>Beta4Gal-T5</shortName>
        <shortName>b4Gal-T5</shortName>
        <ecNumber>2.4.1.-</ecNumber>
    </recommendedName>
    <alternativeName>
        <fullName evidence="2">Beta-1,4-GalT II</fullName>
    </alternativeName>
    <alternativeName>
        <fullName>Glucosylceramide beta-1,4-galactosyltransferase</fullName>
        <ecNumber evidence="8 9 10 12">2.4.1.274</ecNumber>
    </alternativeName>
    <alternativeName>
        <fullName evidence="13 14 15">Lactosylceramide synthase</fullName>
        <shortName evidence="13 14 15">LacCer synthase</shortName>
    </alternativeName>
    <alternativeName>
        <fullName>UDP-Gal:beta-GlcNAc beta-1,4-galactosyltransferase 5</fullName>
    </alternativeName>
    <alternativeName>
        <fullName>UDP-galactose:beta-N-acetylglucosamine beta-1,4-galactosyltransferase 5</fullName>
    </alternativeName>
</protein>
<name>B4GT5_MOUSE</name>
<sequence>MRARRGLLRLPRRSLLAALFFFSLSSSLLYFVYVAPGIVNTYLFMVQAQGILLRDNVRTIGAQVYEQVVRSAYAKRNSSLNDSDYPLDLNHSEAFPPTTTFLPEDFTYFANHPCPERLPSMKGPIDINMSEIAMDDIHELFSRDPAIKLGGHWKPADCVPRWKVAILIPFRNRHEHLPVLLRHLLPMLQRQRLQFAFYVIEQVGTQPFNRAMLFNVGFQEAMKDLDWDCLIFHDVDHIPESDRNYYGCGQMPRHFATKLDKYMYLLPYTEFFGGVSGLTVEQFRKINGFPNAFWGWGGEDDDLWNRVQNAGYSVSRPEGDTGKYKSIPHHHRGEVQFLGRYALLRKSKERQGLDGLNNLNYSANVTYDALYKNITVNLTPELAQVTEY</sequence>
<dbReference type="EC" id="2.4.1.-"/>
<dbReference type="EC" id="2.4.1.274" evidence="8 9 10 12"/>
<dbReference type="EMBL" id="AB004786">
    <property type="protein sequence ID" value="BAA94791.1"/>
    <property type="molecule type" value="mRNA"/>
</dbReference>
<dbReference type="EMBL" id="AL591762">
    <property type="status" value="NOT_ANNOTATED_CDS"/>
    <property type="molecule type" value="Genomic_DNA"/>
</dbReference>
<dbReference type="EMBL" id="AL591854">
    <property type="status" value="NOT_ANNOTATED_CDS"/>
    <property type="molecule type" value="Genomic_DNA"/>
</dbReference>
<dbReference type="EMBL" id="CH466551">
    <property type="protein sequence ID" value="EDL06506.1"/>
    <property type="molecule type" value="Genomic_DNA"/>
</dbReference>
<dbReference type="CCDS" id="CCDS17098.1"/>
<dbReference type="RefSeq" id="NP_062809.2">
    <property type="nucleotide sequence ID" value="NM_019835.2"/>
</dbReference>
<dbReference type="SMR" id="Q9JMK0"/>
<dbReference type="BioGRID" id="207911">
    <property type="interactions" value="1"/>
</dbReference>
<dbReference type="FunCoup" id="Q9JMK0">
    <property type="interactions" value="433"/>
</dbReference>
<dbReference type="STRING" id="10090.ENSMUSP00000104844"/>
<dbReference type="SwissLipids" id="SLP:000000786"/>
<dbReference type="CAZy" id="GT7">
    <property type="family name" value="Glycosyltransferase Family 7"/>
</dbReference>
<dbReference type="GlyCosmos" id="Q9JMK0">
    <property type="glycosylation" value="7 sites, No reported glycans"/>
</dbReference>
<dbReference type="GlyGen" id="Q9JMK0">
    <property type="glycosylation" value="7 sites, 1 N-linked glycan (2 sites)"/>
</dbReference>
<dbReference type="PhosphoSitePlus" id="Q9JMK0"/>
<dbReference type="PaxDb" id="10090-ENSMUSP00000104844"/>
<dbReference type="ProteomicsDB" id="273527"/>
<dbReference type="Pumba" id="Q9JMK0"/>
<dbReference type="Antibodypedia" id="28497">
    <property type="antibodies" value="173 antibodies from 27 providers"/>
</dbReference>
<dbReference type="DNASU" id="56336"/>
<dbReference type="Ensembl" id="ENSMUST00000109221.9">
    <property type="protein sequence ID" value="ENSMUSP00000104844.3"/>
    <property type="gene ID" value="ENSMUSG00000017929.14"/>
</dbReference>
<dbReference type="GeneID" id="56336"/>
<dbReference type="KEGG" id="mmu:56336"/>
<dbReference type="UCSC" id="uc008nzm.1">
    <property type="organism name" value="mouse"/>
</dbReference>
<dbReference type="AGR" id="MGI:1927169"/>
<dbReference type="CTD" id="9334"/>
<dbReference type="MGI" id="MGI:1927169">
    <property type="gene designation" value="B4galt5"/>
</dbReference>
<dbReference type="VEuPathDB" id="HostDB:ENSMUSG00000017929"/>
<dbReference type="eggNOG" id="KOG3916">
    <property type="taxonomic scope" value="Eukaryota"/>
</dbReference>
<dbReference type="GeneTree" id="ENSGT00940000158019"/>
<dbReference type="HOGENOM" id="CLU_044391_6_0_1"/>
<dbReference type="InParanoid" id="Q9JMK0"/>
<dbReference type="OMA" id="KDMDWDC"/>
<dbReference type="OrthoDB" id="10038994at2759"/>
<dbReference type="PhylomeDB" id="Q9JMK0"/>
<dbReference type="TreeFam" id="TF312834"/>
<dbReference type="BRENDA" id="2.4.1.274">
    <property type="organism ID" value="3474"/>
</dbReference>
<dbReference type="Reactome" id="R-MMU-2022854">
    <property type="pathway name" value="Keratan sulfate biosynthesis"/>
</dbReference>
<dbReference type="Reactome" id="R-MMU-913709">
    <property type="pathway name" value="O-linked glycosylation of mucins"/>
</dbReference>
<dbReference type="Reactome" id="R-MMU-975577">
    <property type="pathway name" value="N-Glycan antennae elongation"/>
</dbReference>
<dbReference type="Reactome" id="R-MMU-9840309">
    <property type="pathway name" value="Glycosphingolipid biosynthesis"/>
</dbReference>
<dbReference type="UniPathway" id="UPA00378"/>
<dbReference type="BioGRID-ORCS" id="56336">
    <property type="hits" value="6 hits in 78 CRISPR screens"/>
</dbReference>
<dbReference type="ChiTaRS" id="B4galt5">
    <property type="organism name" value="mouse"/>
</dbReference>
<dbReference type="PRO" id="PR:Q9JMK0"/>
<dbReference type="Proteomes" id="UP000000589">
    <property type="component" value="Chromosome 2"/>
</dbReference>
<dbReference type="RNAct" id="Q9JMK0">
    <property type="molecule type" value="protein"/>
</dbReference>
<dbReference type="Bgee" id="ENSMUSG00000017929">
    <property type="expression patterns" value="Expressed in gastrula and 239 other cell types or tissues"/>
</dbReference>
<dbReference type="ExpressionAtlas" id="Q9JMK0">
    <property type="expression patterns" value="baseline and differential"/>
</dbReference>
<dbReference type="GO" id="GO:0032580">
    <property type="term" value="C:Golgi cisterna membrane"/>
    <property type="evidence" value="ECO:0007669"/>
    <property type="project" value="UniProtKB-SubCell"/>
</dbReference>
<dbReference type="GO" id="GO:0046872">
    <property type="term" value="F:metal ion binding"/>
    <property type="evidence" value="ECO:0007669"/>
    <property type="project" value="UniProtKB-KW"/>
</dbReference>
<dbReference type="GO" id="GO:0003945">
    <property type="term" value="F:N-acetyllactosamine synthase activity"/>
    <property type="evidence" value="ECO:0000315"/>
    <property type="project" value="MGI"/>
</dbReference>
<dbReference type="GO" id="GO:0008489">
    <property type="term" value="F:UDP-galactose:glucosylceramide beta-1,4-galactosyltransferase activity"/>
    <property type="evidence" value="ECO:0000315"/>
    <property type="project" value="UniProtKB"/>
</dbReference>
<dbReference type="GO" id="GO:0005975">
    <property type="term" value="P:carbohydrate metabolic process"/>
    <property type="evidence" value="ECO:0007669"/>
    <property type="project" value="InterPro"/>
</dbReference>
<dbReference type="GO" id="GO:0022010">
    <property type="term" value="P:central nervous system myelination"/>
    <property type="evidence" value="ECO:0000315"/>
    <property type="project" value="UniProtKB"/>
</dbReference>
<dbReference type="GO" id="GO:0021955">
    <property type="term" value="P:central nervous system neuron axonogenesis"/>
    <property type="evidence" value="ECO:0000315"/>
    <property type="project" value="UniProtKB"/>
</dbReference>
<dbReference type="GO" id="GO:0010706">
    <property type="term" value="P:ganglioside biosynthetic process via lactosylceramide"/>
    <property type="evidence" value="ECO:0000315"/>
    <property type="project" value="UniProtKB"/>
</dbReference>
<dbReference type="GO" id="GO:0042551">
    <property type="term" value="P:neuron maturation"/>
    <property type="evidence" value="ECO:0000315"/>
    <property type="project" value="UniProtKB"/>
</dbReference>
<dbReference type="GO" id="GO:0030311">
    <property type="term" value="P:poly-N-acetyllactosamine biosynthetic process"/>
    <property type="evidence" value="ECO:0000315"/>
    <property type="project" value="MGI"/>
</dbReference>
<dbReference type="GO" id="GO:0040019">
    <property type="term" value="P:positive regulation of embryonic development"/>
    <property type="evidence" value="ECO:0000315"/>
    <property type="project" value="UniProtKB"/>
</dbReference>
<dbReference type="GO" id="GO:0006486">
    <property type="term" value="P:protein glycosylation"/>
    <property type="evidence" value="ECO:0000315"/>
    <property type="project" value="UniProtKB"/>
</dbReference>
<dbReference type="GO" id="GO:0031647">
    <property type="term" value="P:regulation of protein stability"/>
    <property type="evidence" value="ECO:0000315"/>
    <property type="project" value="UniProtKB"/>
</dbReference>
<dbReference type="CDD" id="cd00899">
    <property type="entry name" value="b4GalT"/>
    <property type="match status" value="1"/>
</dbReference>
<dbReference type="FunFam" id="3.90.550.10:FF:000037">
    <property type="entry name" value="Beta-1,4-galactosyltransferase 6"/>
    <property type="match status" value="1"/>
</dbReference>
<dbReference type="Gene3D" id="3.90.550.10">
    <property type="entry name" value="Spore Coat Polysaccharide Biosynthesis Protein SpsA, Chain A"/>
    <property type="match status" value="1"/>
</dbReference>
<dbReference type="InterPro" id="IPR003859">
    <property type="entry name" value="Galactosyl_T"/>
</dbReference>
<dbReference type="InterPro" id="IPR027791">
    <property type="entry name" value="Galactosyl_T_C"/>
</dbReference>
<dbReference type="InterPro" id="IPR027995">
    <property type="entry name" value="Galactosyl_T_N"/>
</dbReference>
<dbReference type="InterPro" id="IPR029044">
    <property type="entry name" value="Nucleotide-diphossugar_trans"/>
</dbReference>
<dbReference type="PANTHER" id="PTHR19300">
    <property type="entry name" value="BETA-1,4-GALACTOSYLTRANSFERASE"/>
    <property type="match status" value="1"/>
</dbReference>
<dbReference type="PANTHER" id="PTHR19300:SF45">
    <property type="entry name" value="BETA-1,4-GALACTOSYLTRANSFERASE 5"/>
    <property type="match status" value="1"/>
</dbReference>
<dbReference type="Pfam" id="PF02709">
    <property type="entry name" value="Glyco_transf_7C"/>
    <property type="match status" value="1"/>
</dbReference>
<dbReference type="Pfam" id="PF13733">
    <property type="entry name" value="Glyco_transf_7N"/>
    <property type="match status" value="1"/>
</dbReference>
<dbReference type="PRINTS" id="PR02050">
    <property type="entry name" value="B14GALTRFASE"/>
</dbReference>
<dbReference type="SUPFAM" id="SSF53448">
    <property type="entry name" value="Nucleotide-diphospho-sugar transferases"/>
    <property type="match status" value="1"/>
</dbReference>
<accession>Q9JMK0</accession>
<accession>A2A5T7</accession>
<reference key="1">
    <citation type="journal article" date="2001" name="J. Neurochem.">
        <title>Differential gene expression of beta-1,4-galactosyltransferases I, II and V during mouse brain development.</title>
        <authorList>
            <person name="Nakamura N."/>
            <person name="Yamakawa N."/>
            <person name="Sato T."/>
            <person name="Tojo H."/>
            <person name="Tachi C."/>
            <person name="Furukawa K."/>
        </authorList>
    </citation>
    <scope>NUCLEOTIDE SEQUENCE [MRNA]</scope>
    <scope>TISSUE SPECIFICITY</scope>
    <scope>DEVELOPMENTAL STAGE</scope>
    <source>
        <strain>BALB/cJ</strain>
        <tissue>Brain</tissue>
    </source>
</reference>
<reference key="2">
    <citation type="journal article" date="2009" name="PLoS Biol.">
        <title>Lineage-specific biology revealed by a finished genome assembly of the mouse.</title>
        <authorList>
            <person name="Church D.M."/>
            <person name="Goodstadt L."/>
            <person name="Hillier L.W."/>
            <person name="Zody M.C."/>
            <person name="Goldstein S."/>
            <person name="She X."/>
            <person name="Bult C.J."/>
            <person name="Agarwala R."/>
            <person name="Cherry J.L."/>
            <person name="DiCuccio M."/>
            <person name="Hlavina W."/>
            <person name="Kapustin Y."/>
            <person name="Meric P."/>
            <person name="Maglott D."/>
            <person name="Birtle Z."/>
            <person name="Marques A.C."/>
            <person name="Graves T."/>
            <person name="Zhou S."/>
            <person name="Teague B."/>
            <person name="Potamousis K."/>
            <person name="Churas C."/>
            <person name="Place M."/>
            <person name="Herschleb J."/>
            <person name="Runnheim R."/>
            <person name="Forrest D."/>
            <person name="Amos-Landgraf J."/>
            <person name="Schwartz D.C."/>
            <person name="Cheng Z."/>
            <person name="Lindblad-Toh K."/>
            <person name="Eichler E.E."/>
            <person name="Ponting C.P."/>
        </authorList>
    </citation>
    <scope>NUCLEOTIDE SEQUENCE [LARGE SCALE GENOMIC DNA]</scope>
    <source>
        <strain>C57BL/6J</strain>
    </source>
</reference>
<reference key="3">
    <citation type="submission" date="2005-07" db="EMBL/GenBank/DDBJ databases">
        <authorList>
            <person name="Mural R.J."/>
            <person name="Adams M.D."/>
            <person name="Myers E.W."/>
            <person name="Smith H.O."/>
            <person name="Venter J.C."/>
        </authorList>
    </citation>
    <scope>NUCLEOTIDE SEQUENCE [LARGE SCALE GENOMIC DNA]</scope>
</reference>
<reference key="4">
    <citation type="journal article" date="2010" name="Glycobiology">
        <title>Beta4-galactosyltransferase-5 is a lactosylceramide synthase essential for mouse extra-embryonic development.</title>
        <authorList>
            <person name="Nishie T."/>
            <person name="Hikimochi Y."/>
            <person name="Zama K."/>
            <person name="Fukusumi Y."/>
            <person name="Ito M."/>
            <person name="Yokoyama H."/>
            <person name="Naruse C."/>
            <person name="Ito M."/>
            <person name="Asano M."/>
        </authorList>
    </citation>
    <scope>FUNCTION IN EARLY EMBRYOGENESIS</scope>
    <scope>FUNCTION AS GLUCOSYLCERAMIDE BETA-1,4-GALACTOSYLTRANSFERASE</scope>
    <scope>CATALYTIC ACTIVITY</scope>
    <scope>DISRUPTION PHENOTYPE</scope>
</reference>
<reference key="5">
    <citation type="journal article" date="2010" name="Glycoconj. J.">
        <title>Involvement of murine beta-1,4-galactosyltransferase V in lactosylceramide biosynthesis.</title>
        <authorList>
            <person name="Kumagai T."/>
            <person name="Sato T."/>
            <person name="Natsuka S."/>
            <person name="Kobayashi Y."/>
            <person name="Zhou D."/>
            <person name="Shinkai T."/>
            <person name="Hayakawa S."/>
            <person name="Furukawa K."/>
        </authorList>
    </citation>
    <scope>FUNCTION AS GLUCOSYLCERAMIDE BETA-1,4-GALACTOSYLTRANSFERASE</scope>
    <scope>CATALYTIC ACTIVITY</scope>
</reference>
<reference key="6">
    <citation type="journal article" date="2013" name="Glycobiology">
        <title>Beta4GalT6 is involved in the synthesis of lactosylceramide with less intensity than beta4GalT5.</title>
        <authorList>
            <person name="Tokuda N."/>
            <person name="Numata S."/>
            <person name="Li X."/>
            <person name="Nomura T."/>
            <person name="Takizawa M."/>
            <person name="Kondo Y."/>
            <person name="Yamashita Y."/>
            <person name="Hashimoto N."/>
            <person name="Kiyono T."/>
            <person name="Urano T."/>
            <person name="Furukawa K."/>
            <person name="Furukawa K."/>
        </authorList>
    </citation>
    <scope>FUNCTION AS GLUCOSYLCERAMIDE BETA-1,4-GALACTOSYLTRANSFERASE</scope>
    <scope>CATALYTIC ACTIVITY</scope>
    <scope>DISRUPTION PHENOTYPE</scope>
    <scope>TISSUE SPECIFICITY</scope>
</reference>
<reference key="7">
    <citation type="journal article" date="2018" name="Cell Death Dis.">
        <title>Downregulation of beta1,4-galactosyltransferase 5 improves insulin resistance by promoting adipocyte commitment and reducing inflammation.</title>
        <authorList>
            <person name="Li S.F."/>
            <person name="Zhu C.S."/>
            <person name="Wang Y.M."/>
            <person name="Xie X.X."/>
            <person name="Xiao L.L."/>
            <person name="Zhang Z.C."/>
            <person name="Tang Q.Q."/>
            <person name="Li X."/>
        </authorList>
    </citation>
    <scope>FUNCTION</scope>
    <scope>DISRUPTION PHENOTYPE</scope>
    <scope>INDUCTION</scope>
</reference>
<reference key="8">
    <citation type="journal article" date="2018" name="PLoS Genet.">
        <title>Lactosylceramide synthases encoded by B4galt5 and 6 genes are pivotal for neuronal generation and myelin formation in mice.</title>
        <authorList>
            <person name="Yoshihara T."/>
            <person name="Satake H."/>
            <person name="Nishie T."/>
            <person name="Okino N."/>
            <person name="Hatta T."/>
            <person name="Otani H."/>
            <person name="Naruse C."/>
            <person name="Suzuki H."/>
            <person name="Sugihara K."/>
            <person name="Kamimura E."/>
            <person name="Tokuda N."/>
            <person name="Furukawa K."/>
            <person name="Fururkawa K."/>
            <person name="Ito M."/>
            <person name="Asano M."/>
        </authorList>
    </citation>
    <scope>FUNCTION AS GLUCOSYLCERAMIDE BETA-1,4-GALACTOSYLTRANSFERASE</scope>
    <scope>CATALYTIC ACTIVITY</scope>
    <scope>DISRUPTION PHENOTYPE</scope>
</reference>
<gene>
    <name evidence="17" type="primary">B4galt5</name>
    <name type="synonym">Bgt-5</name>
</gene>
<proteinExistence type="evidence at protein level"/>
<organism>
    <name type="scientific">Mus musculus</name>
    <name type="common">Mouse</name>
    <dbReference type="NCBI Taxonomy" id="10090"/>
    <lineage>
        <taxon>Eukaryota</taxon>
        <taxon>Metazoa</taxon>
        <taxon>Chordata</taxon>
        <taxon>Craniata</taxon>
        <taxon>Vertebrata</taxon>
        <taxon>Euteleostomi</taxon>
        <taxon>Mammalia</taxon>
        <taxon>Eutheria</taxon>
        <taxon>Euarchontoglires</taxon>
        <taxon>Glires</taxon>
        <taxon>Rodentia</taxon>
        <taxon>Myomorpha</taxon>
        <taxon>Muroidea</taxon>
        <taxon>Muridae</taxon>
        <taxon>Murinae</taxon>
        <taxon>Mus</taxon>
        <taxon>Mus</taxon>
    </lineage>
</organism>
<keyword id="KW-1015">Disulfide bond</keyword>
<keyword id="KW-0325">Glycoprotein</keyword>
<keyword id="KW-0328">Glycosyltransferase</keyword>
<keyword id="KW-0333">Golgi apparatus</keyword>
<keyword id="KW-0444">Lipid biosynthesis</keyword>
<keyword id="KW-0443">Lipid metabolism</keyword>
<keyword id="KW-0464">Manganese</keyword>
<keyword id="KW-0472">Membrane</keyword>
<keyword id="KW-0479">Metal-binding</keyword>
<keyword id="KW-1185">Reference proteome</keyword>
<keyword id="KW-0735">Signal-anchor</keyword>
<keyword id="KW-0746">Sphingolipid metabolism</keyword>
<keyword id="KW-0808">Transferase</keyword>
<keyword id="KW-0812">Transmembrane</keyword>
<keyword id="KW-1133">Transmembrane helix</keyword>
<feature type="chain" id="PRO_0000080546" description="Beta-1,4-galactosyltransferase 5">
    <location>
        <begin position="1"/>
        <end position="388"/>
    </location>
</feature>
<feature type="topological domain" description="Cytoplasmic" evidence="6">
    <location>
        <begin position="1"/>
        <end position="14"/>
    </location>
</feature>
<feature type="transmembrane region" description="Helical; Signal-anchor for type II membrane protein" evidence="6">
    <location>
        <begin position="15"/>
        <end position="35"/>
    </location>
</feature>
<feature type="topological domain" description="Lumenal" evidence="6">
    <location>
        <begin position="36"/>
        <end position="388"/>
    </location>
</feature>
<feature type="binding site" evidence="4">
    <location>
        <begin position="169"/>
        <end position="173"/>
    </location>
    <ligand>
        <name>UDP-alpha-D-galactose</name>
        <dbReference type="ChEBI" id="CHEBI:66914"/>
    </ligand>
</feature>
<feature type="binding site" evidence="4">
    <location>
        <begin position="208"/>
        <end position="210"/>
    </location>
    <ligand>
        <name>UDP-alpha-D-galactose</name>
        <dbReference type="ChEBI" id="CHEBI:66914"/>
    </ligand>
</feature>
<feature type="binding site" evidence="4">
    <location>
        <begin position="235"/>
        <end position="236"/>
    </location>
    <ligand>
        <name>UDP-alpha-D-galactose</name>
        <dbReference type="ChEBI" id="CHEBI:66914"/>
    </ligand>
</feature>
<feature type="binding site" evidence="4">
    <location>
        <position position="236"/>
    </location>
    <ligand>
        <name>Mn(2+)</name>
        <dbReference type="ChEBI" id="CHEBI:29035"/>
    </ligand>
</feature>
<feature type="binding site" evidence="4">
    <location>
        <position position="264"/>
    </location>
    <ligand>
        <name>UDP-alpha-D-galactose</name>
        <dbReference type="ChEBI" id="CHEBI:66914"/>
    </ligand>
</feature>
<feature type="binding site" evidence="4">
    <location>
        <position position="296"/>
    </location>
    <ligand>
        <name>UDP-alpha-D-galactose</name>
        <dbReference type="ChEBI" id="CHEBI:66914"/>
    </ligand>
</feature>
<feature type="binding site" evidence="4">
    <location>
        <begin position="298"/>
        <end position="301"/>
    </location>
    <ligand>
        <name>N-acetyl-D-glucosamine</name>
        <dbReference type="ChEBI" id="CHEBI:506227"/>
    </ligand>
</feature>
<feature type="binding site" evidence="4">
    <location>
        <begin position="329"/>
        <end position="330"/>
    </location>
    <ligand>
        <name>UDP-alpha-D-galactose</name>
        <dbReference type="ChEBI" id="CHEBI:66914"/>
    </ligand>
</feature>
<feature type="binding site" evidence="4">
    <location>
        <position position="329"/>
    </location>
    <ligand>
        <name>Mn(2+)</name>
        <dbReference type="ChEBI" id="CHEBI:29035"/>
    </ligand>
</feature>
<feature type="binding site" evidence="4">
    <location>
        <position position="340"/>
    </location>
    <ligand>
        <name>N-acetyl-D-glucosamine</name>
        <dbReference type="ChEBI" id="CHEBI:506227"/>
    </ligand>
</feature>
<feature type="glycosylation site" description="N-linked (GlcNAc...) asparagine" evidence="6">
    <location>
        <position position="77"/>
    </location>
</feature>
<feature type="glycosylation site" description="N-linked (GlcNAc...) asparagine" evidence="6">
    <location>
        <position position="81"/>
    </location>
</feature>
<feature type="glycosylation site" description="N-linked (GlcNAc...) asparagine" evidence="6">
    <location>
        <position position="90"/>
    </location>
</feature>
<feature type="glycosylation site" description="N-linked (GlcNAc...) asparagine" evidence="6">
    <location>
        <position position="128"/>
    </location>
</feature>
<feature type="glycosylation site" description="N-linked (GlcNAc...) asparagine" evidence="6">
    <location>
        <position position="360"/>
    </location>
</feature>
<feature type="glycosylation site" description="N-linked (GlcNAc...) asparagine" evidence="6">
    <location>
        <position position="364"/>
    </location>
</feature>
<feature type="glycosylation site" description="N-linked (GlcNAc...) asparagine" evidence="6">
    <location>
        <position position="373"/>
    </location>
</feature>
<feature type="disulfide bond" evidence="3">
    <location>
        <begin position="114"/>
        <end position="158"/>
    </location>
</feature>
<feature type="disulfide bond" evidence="3">
    <location>
        <begin position="229"/>
        <end position="248"/>
    </location>
</feature>
<feature type="sequence conflict" description="In Ref. 1; BAA94791." evidence="16" ref="1">
    <original>R</original>
    <variation>A</variation>
    <location>
        <position position="192"/>
    </location>
</feature>
<comment type="function">
    <text evidence="8 9 10 11 12">Catalyzes the synthesis of lactosylceramide (LacCer) via the transfer of galactose from UDP-galactose to glucosylceramide (GlcCer) (PubMed:21057870, PubMed:23882130, PubMed:30114188). LacCer is the starting point in the biosynthesis of all gangliosides (membrane-bound glycosphingolipids) which play pivotal roles in the CNS including neuronal maturation and axonal and myelin formation (PubMed:30114188). Plays a role in the glycosylation of BMPR1A and regulation of its protein stability (PubMed:29415997). Essential for extraembryonic development during early embryogenesis (PubMed:20574042, PubMed:21057870).</text>
</comment>
<comment type="catalytic activity">
    <reaction evidence="8 9 10 12">
        <text>a beta-D-glucosyl-(1&lt;-&gt;1')-N-acylsphing-4-enine + UDP-alpha-D-galactose = a beta-D-Gal-(1-&gt;4)-beta-D-Glc-(1&lt;-&gt;1)-Cer(d18:1(4E)) + UDP + H(+)</text>
        <dbReference type="Rhea" id="RHEA:31495"/>
        <dbReference type="ChEBI" id="CHEBI:15378"/>
        <dbReference type="ChEBI" id="CHEBI:17950"/>
        <dbReference type="ChEBI" id="CHEBI:22801"/>
        <dbReference type="ChEBI" id="CHEBI:58223"/>
        <dbReference type="ChEBI" id="CHEBI:66914"/>
        <dbReference type="EC" id="2.4.1.274"/>
    </reaction>
    <physiologicalReaction direction="left-to-right" evidence="12">
        <dbReference type="Rhea" id="RHEA:31496"/>
    </physiologicalReaction>
</comment>
<comment type="cofactor">
    <cofactor evidence="5">
        <name>Mn(2+)</name>
        <dbReference type="ChEBI" id="CHEBI:29035"/>
    </cofactor>
</comment>
<comment type="pathway">
    <text>Protein modification; protein glycosylation.</text>
</comment>
<comment type="pathway">
    <text>Sphingolipid metabolism.</text>
</comment>
<comment type="subcellular location">
    <subcellularLocation>
        <location evidence="3">Golgi apparatus</location>
        <location evidence="3">Golgi stack membrane</location>
        <topology>Single-pass type II membrane protein</topology>
    </subcellularLocation>
    <subcellularLocation>
        <location evidence="1">Golgi apparatus</location>
    </subcellularLocation>
    <text evidence="3">Trans cisternae of Golgi stack.</text>
</comment>
<comment type="tissue specificity">
    <text evidence="7 10">Highest levels in heart, brain, liver and kidney with lower levels in spleen, lung and testis.</text>
</comment>
<comment type="developmental stage">
    <text evidence="7">In the brain, expression increases after birth.</text>
</comment>
<comment type="induction">
    <text evidence="11">Up-regulated in subcutaneous adipose tissue during obesity and diabetes (at protein level).</text>
</comment>
<comment type="disruption phenotype">
    <text evidence="8 11 12">Single knockout mice show early embryonic lethality (PubMed:20574042). Mice with conditional knockout in embryonic fibroblasts are born normally, grow to adulthood without apparent abnormalities but have reduced glucosylceramide beta-1,4-galactosyltransferase activity (PubMed:30114188). Double knockout mice of B4GALT5 and B4GALT6 genes develop normally during embryogenesis and perinatal stage (PubMed:30114188). However, they show growth retardation and motor deficits with hindlimb dysfunction at 2 weeks of age, and they all die by 4 weeks of age (PubMed:30114188). Axonal and myelin formation are remarkably impaired in the spinal cords and increased immature neurons in the cerebral cortices seen (PubMed:30114188). Glucosylceramide beta-1,4-galactosyltransferase activity and major brain gangliosides are completely absent in brain (PubMed:30114188). Knockdown in subcutaneous adipose tissue alleviates insulin resistance and adipose tissue inflammation, increases adipogenesis in high-fat diet (HFD)-fed mice and ob/ob mice and reduces the glycosylation of BMPR1A (PubMed:29415997).</text>
</comment>
<comment type="similarity">
    <text evidence="16">Belongs to the glycosyltransferase 7 family.</text>
</comment>
<comment type="online information" name="Functional Glycomics Gateway - GTase">
    <link uri="http://www.functionalglycomics.org/glycomics/molecule/jsp/glycoEnzyme/viewGlycoEnzyme.jsp?gbpId=gt_mou_464"/>
    <text>b4GalT5</text>
</comment>
<evidence type="ECO:0000250" key="1">
    <source>
        <dbReference type="UniProtKB" id="A0A1S6M251"/>
    </source>
</evidence>
<evidence type="ECO:0000250" key="2">
    <source>
        <dbReference type="UniProtKB" id="O43286"/>
    </source>
</evidence>
<evidence type="ECO:0000250" key="3">
    <source>
        <dbReference type="UniProtKB" id="P15291"/>
    </source>
</evidence>
<evidence type="ECO:0000250" key="4">
    <source>
        <dbReference type="UniProtKB" id="Q9UBV7"/>
    </source>
</evidence>
<evidence type="ECO:0000250" key="5">
    <source>
        <dbReference type="UniProtKB" id="Q9UBX8"/>
    </source>
</evidence>
<evidence type="ECO:0000255" key="6"/>
<evidence type="ECO:0000269" key="7">
    <source>
    </source>
</evidence>
<evidence type="ECO:0000269" key="8">
    <source>
    </source>
</evidence>
<evidence type="ECO:0000269" key="9">
    <source>
    </source>
</evidence>
<evidence type="ECO:0000269" key="10">
    <source>
    </source>
</evidence>
<evidence type="ECO:0000269" key="11">
    <source>
    </source>
</evidence>
<evidence type="ECO:0000269" key="12">
    <source>
    </source>
</evidence>
<evidence type="ECO:0000303" key="13">
    <source>
    </source>
</evidence>
<evidence type="ECO:0000303" key="14">
    <source>
    </source>
</evidence>
<evidence type="ECO:0000303" key="15">
    <source>
    </source>
</evidence>
<evidence type="ECO:0000305" key="16"/>
<evidence type="ECO:0000312" key="17">
    <source>
        <dbReference type="MGI" id="MGI:1927169"/>
    </source>
</evidence>